<organism>
    <name type="scientific">Bacillus mycoides (strain KBAB4)</name>
    <name type="common">Bacillus weihenstephanensis</name>
    <dbReference type="NCBI Taxonomy" id="315730"/>
    <lineage>
        <taxon>Bacteria</taxon>
        <taxon>Bacillati</taxon>
        <taxon>Bacillota</taxon>
        <taxon>Bacilli</taxon>
        <taxon>Bacillales</taxon>
        <taxon>Bacillaceae</taxon>
        <taxon>Bacillus</taxon>
        <taxon>Bacillus cereus group</taxon>
    </lineage>
</organism>
<dbReference type="EC" id="2.5.1.145" evidence="1"/>
<dbReference type="EMBL" id="CP000903">
    <property type="protein sequence ID" value="ABY46103.1"/>
    <property type="molecule type" value="Genomic_DNA"/>
</dbReference>
<dbReference type="RefSeq" id="WP_002034719.1">
    <property type="nucleotide sequence ID" value="NZ_CAKMRX030000110.1"/>
</dbReference>
<dbReference type="SMR" id="A9VQ76"/>
<dbReference type="GeneID" id="66265307"/>
<dbReference type="KEGG" id="bwe:BcerKBAB4_4955"/>
<dbReference type="eggNOG" id="COG0682">
    <property type="taxonomic scope" value="Bacteria"/>
</dbReference>
<dbReference type="HOGENOM" id="CLU_013386_0_1_9"/>
<dbReference type="UniPathway" id="UPA00664"/>
<dbReference type="Proteomes" id="UP000002154">
    <property type="component" value="Chromosome"/>
</dbReference>
<dbReference type="GO" id="GO:0005886">
    <property type="term" value="C:plasma membrane"/>
    <property type="evidence" value="ECO:0007669"/>
    <property type="project" value="UniProtKB-SubCell"/>
</dbReference>
<dbReference type="GO" id="GO:0008961">
    <property type="term" value="F:phosphatidylglycerol-prolipoprotein diacylglyceryl transferase activity"/>
    <property type="evidence" value="ECO:0007669"/>
    <property type="project" value="UniProtKB-UniRule"/>
</dbReference>
<dbReference type="GO" id="GO:0042158">
    <property type="term" value="P:lipoprotein biosynthetic process"/>
    <property type="evidence" value="ECO:0007669"/>
    <property type="project" value="UniProtKB-UniRule"/>
</dbReference>
<dbReference type="HAMAP" id="MF_01147">
    <property type="entry name" value="Lgt"/>
    <property type="match status" value="1"/>
</dbReference>
<dbReference type="InterPro" id="IPR001640">
    <property type="entry name" value="Lgt"/>
</dbReference>
<dbReference type="NCBIfam" id="TIGR00544">
    <property type="entry name" value="lgt"/>
    <property type="match status" value="1"/>
</dbReference>
<dbReference type="PANTHER" id="PTHR30589:SF0">
    <property type="entry name" value="PHOSPHATIDYLGLYCEROL--PROLIPOPROTEIN DIACYLGLYCERYL TRANSFERASE"/>
    <property type="match status" value="1"/>
</dbReference>
<dbReference type="PANTHER" id="PTHR30589">
    <property type="entry name" value="PROLIPOPROTEIN DIACYLGLYCERYL TRANSFERASE"/>
    <property type="match status" value="1"/>
</dbReference>
<dbReference type="Pfam" id="PF01790">
    <property type="entry name" value="LGT"/>
    <property type="match status" value="1"/>
</dbReference>
<dbReference type="PROSITE" id="PS01311">
    <property type="entry name" value="LGT"/>
    <property type="match status" value="1"/>
</dbReference>
<accession>A9VQ76</accession>
<feature type="chain" id="PRO_1000137400" description="Phosphatidylglycerol--prolipoprotein diacylglyceryl transferase">
    <location>
        <begin position="1"/>
        <end position="270"/>
    </location>
</feature>
<feature type="transmembrane region" description="Helical" evidence="1">
    <location>
        <begin position="19"/>
        <end position="39"/>
    </location>
</feature>
<feature type="transmembrane region" description="Helical" evidence="1">
    <location>
        <begin position="54"/>
        <end position="74"/>
    </location>
</feature>
<feature type="transmembrane region" description="Helical" evidence="1">
    <location>
        <begin position="92"/>
        <end position="112"/>
    </location>
</feature>
<feature type="transmembrane region" description="Helical" evidence="1">
    <location>
        <begin position="116"/>
        <end position="136"/>
    </location>
</feature>
<feature type="transmembrane region" description="Helical" evidence="1">
    <location>
        <begin position="178"/>
        <end position="198"/>
    </location>
</feature>
<feature type="transmembrane region" description="Helical" evidence="1">
    <location>
        <begin position="206"/>
        <end position="226"/>
    </location>
</feature>
<feature type="transmembrane region" description="Helical" evidence="1">
    <location>
        <begin position="236"/>
        <end position="256"/>
    </location>
</feature>
<feature type="binding site" evidence="1">
    <location>
        <position position="138"/>
    </location>
    <ligand>
        <name>a 1,2-diacyl-sn-glycero-3-phospho-(1'-sn-glycerol)</name>
        <dbReference type="ChEBI" id="CHEBI:64716"/>
    </ligand>
</feature>
<protein>
    <recommendedName>
        <fullName evidence="1">Phosphatidylglycerol--prolipoprotein diacylglyceryl transferase</fullName>
        <ecNumber evidence="1">2.5.1.145</ecNumber>
    </recommendedName>
</protein>
<evidence type="ECO:0000255" key="1">
    <source>
        <dbReference type="HAMAP-Rule" id="MF_01147"/>
    </source>
</evidence>
<proteinExistence type="inferred from homology"/>
<sequence>MLLGSVPQLDRIAVQLGPFPVYWYGVIIGTGVLLGLWLATREGERLGIHKDTFIDLVLIAVPIAILFARMYYVIFEWEYYSQNPSQIINIRQGGLAIHGGLIGAVITGILFAKRRGLSFWKLADIAAPSILLGQAIGRWGNFMNQEAHGDEVTRQFLEGLHLPDFIINQMYIDGVYYHPTFLYESLWNFAGVILLLALRKVNLRRGELFFTYLIWYSVGRFFVEGLRTDSLMLGPLRIAQVMSIGIVVISIIFIIVRRKMGQADKRYLEN</sequence>
<gene>
    <name evidence="1" type="primary">lgt</name>
    <name type="ordered locus">BcerKBAB4_4955</name>
</gene>
<reference key="1">
    <citation type="journal article" date="2008" name="Chem. Biol. Interact.">
        <title>Extending the Bacillus cereus group genomics to putative food-borne pathogens of different toxicity.</title>
        <authorList>
            <person name="Lapidus A."/>
            <person name="Goltsman E."/>
            <person name="Auger S."/>
            <person name="Galleron N."/>
            <person name="Segurens B."/>
            <person name="Dossat C."/>
            <person name="Land M.L."/>
            <person name="Broussolle V."/>
            <person name="Brillard J."/>
            <person name="Guinebretiere M.-H."/>
            <person name="Sanchis V."/>
            <person name="Nguen-the C."/>
            <person name="Lereclus D."/>
            <person name="Richardson P."/>
            <person name="Wincker P."/>
            <person name="Weissenbach J."/>
            <person name="Ehrlich S.D."/>
            <person name="Sorokin A."/>
        </authorList>
    </citation>
    <scope>NUCLEOTIDE SEQUENCE [LARGE SCALE GENOMIC DNA]</scope>
    <source>
        <strain>KBAB4</strain>
    </source>
</reference>
<name>LGT_BACMK</name>
<keyword id="KW-1003">Cell membrane</keyword>
<keyword id="KW-0472">Membrane</keyword>
<keyword id="KW-0808">Transferase</keyword>
<keyword id="KW-0812">Transmembrane</keyword>
<keyword id="KW-1133">Transmembrane helix</keyword>
<comment type="function">
    <text evidence="1">Catalyzes the transfer of the diacylglyceryl group from phosphatidylglycerol to the sulfhydryl group of the N-terminal cysteine of a prolipoprotein, the first step in the formation of mature lipoproteins.</text>
</comment>
<comment type="catalytic activity">
    <reaction evidence="1">
        <text>L-cysteinyl-[prolipoprotein] + a 1,2-diacyl-sn-glycero-3-phospho-(1'-sn-glycerol) = an S-1,2-diacyl-sn-glyceryl-L-cysteinyl-[prolipoprotein] + sn-glycerol 1-phosphate + H(+)</text>
        <dbReference type="Rhea" id="RHEA:56712"/>
        <dbReference type="Rhea" id="RHEA-COMP:14679"/>
        <dbReference type="Rhea" id="RHEA-COMP:14680"/>
        <dbReference type="ChEBI" id="CHEBI:15378"/>
        <dbReference type="ChEBI" id="CHEBI:29950"/>
        <dbReference type="ChEBI" id="CHEBI:57685"/>
        <dbReference type="ChEBI" id="CHEBI:64716"/>
        <dbReference type="ChEBI" id="CHEBI:140658"/>
        <dbReference type="EC" id="2.5.1.145"/>
    </reaction>
</comment>
<comment type="pathway">
    <text evidence="1">Protein modification; lipoprotein biosynthesis (diacylglyceryl transfer).</text>
</comment>
<comment type="subcellular location">
    <subcellularLocation>
        <location evidence="1">Cell membrane</location>
        <topology evidence="1">Multi-pass membrane protein</topology>
    </subcellularLocation>
</comment>
<comment type="similarity">
    <text evidence="1">Belongs to the Lgt family.</text>
</comment>